<organism>
    <name type="scientific">Centruroides limpidus</name>
    <name type="common">Mexican scorpion</name>
    <dbReference type="NCBI Taxonomy" id="6876"/>
    <lineage>
        <taxon>Eukaryota</taxon>
        <taxon>Metazoa</taxon>
        <taxon>Ecdysozoa</taxon>
        <taxon>Arthropoda</taxon>
        <taxon>Chelicerata</taxon>
        <taxon>Arachnida</taxon>
        <taxon>Scorpiones</taxon>
        <taxon>Buthida</taxon>
        <taxon>Buthoidea</taxon>
        <taxon>Buthidae</taxon>
        <taxon>Centruroides</taxon>
    </lineage>
</organism>
<keyword id="KW-0903">Direct protein sequencing</keyword>
<keyword id="KW-1015">Disulfide bond</keyword>
<keyword id="KW-0964">Secreted</keyword>
<keyword id="KW-0800">Toxin</keyword>
<dbReference type="SMR" id="P0DL69"/>
<dbReference type="GO" id="GO:0005576">
    <property type="term" value="C:extracellular region"/>
    <property type="evidence" value="ECO:0007669"/>
    <property type="project" value="UniProtKB-SubCell"/>
</dbReference>
<dbReference type="GO" id="GO:0090729">
    <property type="term" value="F:toxin activity"/>
    <property type="evidence" value="ECO:0007669"/>
    <property type="project" value="UniProtKB-KW"/>
</dbReference>
<protein>
    <recommendedName>
        <fullName evidence="2">Orphan peptide CllNtx</fullName>
    </recommendedName>
</protein>
<comment type="function">
    <text evidence="3">May act as a toxin.</text>
</comment>
<comment type="subcellular location">
    <subcellularLocation>
        <location evidence="1">Secreted</location>
    </subcellularLocation>
</comment>
<comment type="tissue specificity">
    <text evidence="4">Expressed by the venom gland.</text>
</comment>
<comment type="PTM">
    <text evidence="3">Contains 3 disulfide bonds.</text>
</comment>
<comment type="miscellaneous">
    <text evidence="1">This toxin is only found in male specimens.</text>
</comment>
<comment type="miscellaneous">
    <text evidence="1">Negative results: does not show toxicity when intracranially injected into mice or when injected into insects (A.domestica). Does not show effect when injected into female scorpion. Does not show antimicrobial activity. Does not show activity on Kv10.1/KCNH1/EAG1 and Shaker channels.</text>
</comment>
<accession>P0DL69</accession>
<evidence type="ECO:0000269" key="1">
    <source>
    </source>
</evidence>
<evidence type="ECO:0000303" key="2">
    <source>
    </source>
</evidence>
<evidence type="ECO:0000305" key="3"/>
<evidence type="ECO:0000305" key="4">
    <source>
    </source>
</evidence>
<name>UNTX_CENLI</name>
<feature type="peptide" id="PRO_0000440866" description="Orphan peptide CllNtx" evidence="1">
    <location>
        <begin position="1"/>
        <end position="29"/>
    </location>
</feature>
<sequence length="29" mass="3393">KYCYNDDDCKSECMVVKYCQQGTCYCKGN</sequence>
<reference key="1">
    <citation type="journal article" date="2017" name="Toxicon">
        <title>Comparative proteomic analysis of female and male venoms from the Mexican scorpion Centruroides limpidus: novel components found.</title>
        <authorList>
            <person name="Cid Uribe J.I."/>
            <person name="Jimenez Vargas J.M."/>
            <person name="Ferreira Batista C.V."/>
            <person name="Zamudio Zuniga F."/>
            <person name="Possani L.D."/>
        </authorList>
    </citation>
    <scope>PROTEIN SEQUENCE</scope>
    <scope>SUBCELLULAR LOCATION</scope>
    <source>
        <tissue>Venom</tissue>
    </source>
</reference>
<proteinExistence type="evidence at protein level"/>